<protein>
    <recommendedName>
        <fullName>UPF0758 protein Moth_0536</fullName>
    </recommendedName>
</protein>
<sequence length="229" mass="24884">MTGGQGVTIKELPAELRPRERLLAAGVQALSNAELLAILLRTGTRTESALDVARRLLSGPDGLQFLAGATLEELQQQKGIGLAKAAELKAALELGRRLAAFTLSRTVIRNPRDVAGLLLDEMRYLDRENFRTVSLNTKNQVLGIDNVSVGSLNSSLAHPREVFKDPIRRSAAAIILAHNHPSGDPTPSQEDIMVTRRLVEAGHILGIEVLDHLIIGDGRFTSLKERNLL</sequence>
<gene>
    <name type="ordered locus">Moth_0536</name>
</gene>
<reference key="1">
    <citation type="journal article" date="2008" name="Environ. Microbiol.">
        <title>The complete genome sequence of Moorella thermoacetica (f. Clostridium thermoaceticum).</title>
        <authorList>
            <person name="Pierce E."/>
            <person name="Xie G."/>
            <person name="Barabote R.D."/>
            <person name="Saunders E."/>
            <person name="Han C.S."/>
            <person name="Detter J.C."/>
            <person name="Richardson P."/>
            <person name="Brettin T.S."/>
            <person name="Das A."/>
            <person name="Ljungdahl L.G."/>
            <person name="Ragsdale S.W."/>
        </authorList>
    </citation>
    <scope>NUCLEOTIDE SEQUENCE [LARGE SCALE GENOMIC DNA]</scope>
    <source>
        <strain>ATCC 39073 / JCM 9320</strain>
    </source>
</reference>
<keyword id="KW-0378">Hydrolase</keyword>
<keyword id="KW-0479">Metal-binding</keyword>
<keyword id="KW-0482">Metalloprotease</keyword>
<keyword id="KW-0645">Protease</keyword>
<keyword id="KW-0862">Zinc</keyword>
<name>Y536_MOOTA</name>
<dbReference type="EMBL" id="CP000232">
    <property type="protein sequence ID" value="ABC18866.1"/>
    <property type="molecule type" value="Genomic_DNA"/>
</dbReference>
<dbReference type="RefSeq" id="YP_429409.1">
    <property type="nucleotide sequence ID" value="NC_007644.1"/>
</dbReference>
<dbReference type="SMR" id="Q2RL23"/>
<dbReference type="STRING" id="264732.Moth_0536"/>
<dbReference type="EnsemblBacteria" id="ABC18866">
    <property type="protein sequence ID" value="ABC18866"/>
    <property type="gene ID" value="Moth_0536"/>
</dbReference>
<dbReference type="KEGG" id="mta:Moth_0536"/>
<dbReference type="PATRIC" id="fig|264732.11.peg.578"/>
<dbReference type="eggNOG" id="COG2003">
    <property type="taxonomic scope" value="Bacteria"/>
</dbReference>
<dbReference type="HOGENOM" id="CLU_073529_0_2_9"/>
<dbReference type="OrthoDB" id="9804482at2"/>
<dbReference type="GO" id="GO:0046872">
    <property type="term" value="F:metal ion binding"/>
    <property type="evidence" value="ECO:0007669"/>
    <property type="project" value="UniProtKB-KW"/>
</dbReference>
<dbReference type="GO" id="GO:0008237">
    <property type="term" value="F:metallopeptidase activity"/>
    <property type="evidence" value="ECO:0007669"/>
    <property type="project" value="UniProtKB-KW"/>
</dbReference>
<dbReference type="GO" id="GO:0006508">
    <property type="term" value="P:proteolysis"/>
    <property type="evidence" value="ECO:0007669"/>
    <property type="project" value="UniProtKB-KW"/>
</dbReference>
<dbReference type="CDD" id="cd08071">
    <property type="entry name" value="MPN_DUF2466"/>
    <property type="match status" value="1"/>
</dbReference>
<dbReference type="Gene3D" id="3.40.140.10">
    <property type="entry name" value="Cytidine Deaminase, domain 2"/>
    <property type="match status" value="1"/>
</dbReference>
<dbReference type="InterPro" id="IPR037518">
    <property type="entry name" value="MPN"/>
</dbReference>
<dbReference type="InterPro" id="IPR025657">
    <property type="entry name" value="RadC_JAB"/>
</dbReference>
<dbReference type="InterPro" id="IPR010994">
    <property type="entry name" value="RuvA_2-like"/>
</dbReference>
<dbReference type="InterPro" id="IPR001405">
    <property type="entry name" value="UPF0758"/>
</dbReference>
<dbReference type="InterPro" id="IPR020891">
    <property type="entry name" value="UPF0758_CS"/>
</dbReference>
<dbReference type="InterPro" id="IPR046778">
    <property type="entry name" value="UPF0758_N"/>
</dbReference>
<dbReference type="NCBIfam" id="NF000642">
    <property type="entry name" value="PRK00024.1"/>
    <property type="match status" value="1"/>
</dbReference>
<dbReference type="NCBIfam" id="TIGR00608">
    <property type="entry name" value="radc"/>
    <property type="match status" value="1"/>
</dbReference>
<dbReference type="PANTHER" id="PTHR30471">
    <property type="entry name" value="DNA REPAIR PROTEIN RADC"/>
    <property type="match status" value="1"/>
</dbReference>
<dbReference type="PANTHER" id="PTHR30471:SF3">
    <property type="entry name" value="UPF0758 PROTEIN YEES-RELATED"/>
    <property type="match status" value="1"/>
</dbReference>
<dbReference type="Pfam" id="PF04002">
    <property type="entry name" value="RadC"/>
    <property type="match status" value="1"/>
</dbReference>
<dbReference type="Pfam" id="PF20582">
    <property type="entry name" value="UPF0758_N"/>
    <property type="match status" value="1"/>
</dbReference>
<dbReference type="SUPFAM" id="SSF102712">
    <property type="entry name" value="JAB1/MPN domain"/>
    <property type="match status" value="1"/>
</dbReference>
<dbReference type="SUPFAM" id="SSF47781">
    <property type="entry name" value="RuvA domain 2-like"/>
    <property type="match status" value="1"/>
</dbReference>
<dbReference type="PROSITE" id="PS50249">
    <property type="entry name" value="MPN"/>
    <property type="match status" value="1"/>
</dbReference>
<dbReference type="PROSITE" id="PS01302">
    <property type="entry name" value="UPF0758"/>
    <property type="match status" value="1"/>
</dbReference>
<feature type="chain" id="PRO_1000001668" description="UPF0758 protein Moth_0536">
    <location>
        <begin position="1"/>
        <end position="229"/>
    </location>
</feature>
<feature type="domain" description="MPN" evidence="1">
    <location>
        <begin position="107"/>
        <end position="229"/>
    </location>
</feature>
<feature type="short sequence motif" description="JAMM motif" evidence="1">
    <location>
        <begin position="178"/>
        <end position="191"/>
    </location>
</feature>
<feature type="binding site" evidence="1">
    <location>
        <position position="178"/>
    </location>
    <ligand>
        <name>Zn(2+)</name>
        <dbReference type="ChEBI" id="CHEBI:29105"/>
        <note>catalytic</note>
    </ligand>
</feature>
<feature type="binding site" evidence="1">
    <location>
        <position position="180"/>
    </location>
    <ligand>
        <name>Zn(2+)</name>
        <dbReference type="ChEBI" id="CHEBI:29105"/>
        <note>catalytic</note>
    </ligand>
</feature>
<feature type="binding site" evidence="1">
    <location>
        <position position="191"/>
    </location>
    <ligand>
        <name>Zn(2+)</name>
        <dbReference type="ChEBI" id="CHEBI:29105"/>
        <note>catalytic</note>
    </ligand>
</feature>
<comment type="similarity">
    <text evidence="2">Belongs to the UPF0758 family.</text>
</comment>
<evidence type="ECO:0000255" key="1">
    <source>
        <dbReference type="PROSITE-ProRule" id="PRU01182"/>
    </source>
</evidence>
<evidence type="ECO:0000305" key="2"/>
<proteinExistence type="inferred from homology"/>
<accession>Q2RL23</accession>
<organism>
    <name type="scientific">Moorella thermoacetica (strain ATCC 39073 / JCM 9320)</name>
    <dbReference type="NCBI Taxonomy" id="264732"/>
    <lineage>
        <taxon>Bacteria</taxon>
        <taxon>Bacillati</taxon>
        <taxon>Bacillota</taxon>
        <taxon>Clostridia</taxon>
        <taxon>Moorellales</taxon>
        <taxon>Moorellaceae</taxon>
        <taxon>Moorella</taxon>
    </lineage>
</organism>